<organism>
    <name type="scientific">Human papillomavirus 47</name>
    <dbReference type="NCBI Taxonomy" id="10594"/>
    <lineage>
        <taxon>Viruses</taxon>
        <taxon>Monodnaviria</taxon>
        <taxon>Shotokuvirae</taxon>
        <taxon>Cossaviricota</taxon>
        <taxon>Papovaviricetes</taxon>
        <taxon>Zurhausenvirales</taxon>
        <taxon>Papillomaviridae</taxon>
        <taxon>Firstpapillomavirinae</taxon>
        <taxon>Betapapillomavirus</taxon>
        <taxon>Betapapillomavirus 1</taxon>
    </lineage>
</organism>
<proteinExistence type="inferred from homology"/>
<reference key="1">
    <citation type="journal article" date="1990" name="Virology">
        <title>Genome organization and taxonomic position of human papillomavirus type 47 inferred from its DNA sequence.</title>
        <authorList>
            <person name="Kiyono T."/>
            <person name="Adachi A."/>
            <person name="Ishibashi M."/>
        </authorList>
    </citation>
    <scope>NUCLEOTIDE SEQUENCE [GENOMIC DNA]</scope>
</reference>
<sequence length="230" mass="24329">MADSKAPHHQGHQEDKQTQTPPPRPPPPPQPPLTPRPDANPSINSHNKPKPNEEGTDGDHQAEQGDRKRTKGDPDPDPGRGPVLKPTLPPPPPPPPTGPGLRRSTRLVLVPGQGPPPDLPAPPVEGEVEGHPQGKDRDHPPPTPQNGHGKETQGAEGGGDKGEQGAVGGESSDGEGDHSQPPLTPPNESDGSLLNTVACLLARWESNFDQLVQNIQGDLEGYWRKLGTPQ</sequence>
<gene>
    <name type="primary">E4</name>
</gene>
<protein>
    <recommendedName>
        <fullName>Protein E4</fullName>
    </recommendedName>
</protein>
<evidence type="ECO:0000250" key="1">
    <source>
        <dbReference type="UniProtKB" id="P06922"/>
    </source>
</evidence>
<evidence type="ECO:0000256" key="2">
    <source>
        <dbReference type="SAM" id="MobiDB-lite"/>
    </source>
</evidence>
<evidence type="ECO:0000305" key="3"/>
<feature type="chain" id="PRO_0000133275" description="Protein E4">
    <location>
        <begin position="1"/>
        <end position="230"/>
    </location>
</feature>
<feature type="region of interest" description="Disordered" evidence="2">
    <location>
        <begin position="1"/>
        <end position="192"/>
    </location>
</feature>
<feature type="compositionally biased region" description="Pro residues" evidence="2">
    <location>
        <begin position="20"/>
        <end position="35"/>
    </location>
</feature>
<feature type="compositionally biased region" description="Basic and acidic residues" evidence="2">
    <location>
        <begin position="50"/>
        <end position="78"/>
    </location>
</feature>
<feature type="compositionally biased region" description="Pro residues" evidence="2">
    <location>
        <begin position="87"/>
        <end position="98"/>
    </location>
</feature>
<feature type="compositionally biased region" description="Pro residues" evidence="2">
    <location>
        <begin position="113"/>
        <end position="123"/>
    </location>
</feature>
<feature type="compositionally biased region" description="Basic and acidic residues" evidence="2">
    <location>
        <begin position="128"/>
        <end position="140"/>
    </location>
</feature>
<feature type="compositionally biased region" description="Basic and acidic residues" evidence="2">
    <location>
        <begin position="148"/>
        <end position="163"/>
    </location>
</feature>
<dbReference type="EMBL" id="M32305">
    <property type="protein sequence ID" value="AAA46980.1"/>
    <property type="status" value="ALT_SEQ"/>
    <property type="molecule type" value="Genomic_DNA"/>
</dbReference>
<dbReference type="PIR" id="E35324">
    <property type="entry name" value="W4WL47"/>
</dbReference>
<dbReference type="SMR" id="P22421"/>
<dbReference type="Proteomes" id="UP000008697">
    <property type="component" value="Genome"/>
</dbReference>
<dbReference type="GO" id="GO:0030430">
    <property type="term" value="C:host cell cytoplasm"/>
    <property type="evidence" value="ECO:0007669"/>
    <property type="project" value="UniProtKB-SubCell"/>
</dbReference>
<dbReference type="GO" id="GO:0042025">
    <property type="term" value="C:host cell nucleus"/>
    <property type="evidence" value="ECO:0007669"/>
    <property type="project" value="UniProtKB-SubCell"/>
</dbReference>
<dbReference type="GO" id="GO:0039592">
    <property type="term" value="P:symbiont-mediated arrest of host cell cycle during G2/M transition"/>
    <property type="evidence" value="ECO:0007669"/>
    <property type="project" value="UniProtKB-KW"/>
</dbReference>
<accession>P22421</accession>
<comment type="function">
    <text evidence="1">Contributes to multiple aspects of the viral life cycle including viral genome amplification, suppression of suprabasal cell differentiation and egress of newly formed virions. Induces host cell cycle arrest at the G2 phase by associating with and preventing the nuclear entry of host CDK1/cyclin B1 complexes. Inhibits cellular DNA replication by preventing loading of host replication licensing proteins MCM2 and MCM7 onto chromatin. Within the cytoplasm, associates with host kinase SRPK1, a splicing factor regulator, and inhibits its activity. Therefore, E4 favors expression of late viral transcripts by inhibiting SRPK1-mediated phosphorylation of host serine-arginine (SR) proteins that have critical roles in mRNA metabolism. Late in the infectious cycle, E4 also acts to diminish the integrity of the keratinocyte by disrupting the keratin cytoskeleton and inducing apoptosis through alteration of mitochondrial function to facilitate egress of the newly formed virions.</text>
</comment>
<comment type="subunit">
    <text evidence="1">Assembles into oligomeric complexes. Interacts with host CDK1. Interacts with host SRPK1; this interaction may favor expression of late viral transcripts. Interacts with host cytokeratin components KRT8 and KRT18.</text>
</comment>
<comment type="subcellular location">
    <subcellularLocation>
        <location evidence="1">Host cytoplasm</location>
    </subcellularLocation>
    <subcellularLocation>
        <location evidence="1">Host nucleus</location>
    </subcellularLocation>
</comment>
<comment type="PTM">
    <text evidence="1">Phosphorylated by host ERK. The phosphorylation triggers a structural change that enhances keratin binding and protein stability.</text>
</comment>
<comment type="miscellaneous">
    <text evidence="1">The major E4 form is first synthesized as an E1^E4 fusion protein from spliced E1^E4 transcripts, such that the first few amino acids of the E4 protein are derived from the N terminus of E1.</text>
</comment>
<comment type="similarity">
    <text evidence="3">Belongs to the papillomaviridae E4 protein family.</text>
</comment>
<organismHost>
    <name type="scientific">Homo sapiens</name>
    <name type="common">Human</name>
    <dbReference type="NCBI Taxonomy" id="9606"/>
</organismHost>
<name>VE4_HPV47</name>
<keyword id="KW-0244">Early protein</keyword>
<keyword id="KW-1035">Host cytoplasm</keyword>
<keyword id="KW-1079">Host G2/M cell cycle arrest by virus</keyword>
<keyword id="KW-1048">Host nucleus</keyword>
<keyword id="KW-0945">Host-virus interaction</keyword>
<keyword id="KW-1121">Modulation of host cell cycle by virus</keyword>
<keyword id="KW-0597">Phosphoprotein</keyword>